<comment type="catalytic activity">
    <reaction>
        <text>N(6)-(1,2-dicarboxyethyl)-AMP = fumarate + AMP</text>
        <dbReference type="Rhea" id="RHEA:16853"/>
        <dbReference type="ChEBI" id="CHEBI:29806"/>
        <dbReference type="ChEBI" id="CHEBI:57567"/>
        <dbReference type="ChEBI" id="CHEBI:456215"/>
        <dbReference type="EC" id="4.3.2.2"/>
    </reaction>
</comment>
<comment type="catalytic activity">
    <reaction>
        <text>(2S)-2-[5-amino-1-(5-phospho-beta-D-ribosyl)imidazole-4-carboxamido]succinate = 5-amino-1-(5-phospho-beta-D-ribosyl)imidazole-4-carboxamide + fumarate</text>
        <dbReference type="Rhea" id="RHEA:23920"/>
        <dbReference type="ChEBI" id="CHEBI:29806"/>
        <dbReference type="ChEBI" id="CHEBI:58443"/>
        <dbReference type="ChEBI" id="CHEBI:58475"/>
        <dbReference type="EC" id="4.3.2.2"/>
    </reaction>
</comment>
<comment type="pathway">
    <text>Purine metabolism; AMP biosynthesis via de novo pathway; AMP from IMP: step 2/2.</text>
</comment>
<comment type="pathway">
    <text>Purine metabolism; IMP biosynthesis via de novo pathway; 5-amino-1-(5-phospho-D-ribosyl)imidazole-4-carboxamide from 5-amino-1-(5-phospho-D-ribosyl)imidazole-4-carboxylate: step 2/2.</text>
</comment>
<comment type="subunit">
    <text evidence="1">Homotetramer. Residues from neighboring subunits contribute catalytic and substrate-binding residues to each active site (By similarity).</text>
</comment>
<comment type="interaction">
    <interactant intactId="EBI-14263">
        <id>Q05911</id>
    </interactant>
    <interactant intactId="EBI-8973">
        <id>P06103</id>
        <label>PRT1</label>
    </interactant>
    <organismsDiffer>false</organismsDiffer>
    <experiments>2</experiments>
</comment>
<comment type="similarity">
    <text evidence="3">Belongs to the lyase 1 family. Adenylosuccinate lyase subfamily.</text>
</comment>
<gene>
    <name type="primary">ADE13</name>
    <name type="ordered locus">YLR359W</name>
    <name type="ORF">L8039.12</name>
</gene>
<dbReference type="EC" id="4.3.2.2"/>
<dbReference type="EMBL" id="U19103">
    <property type="protein sequence ID" value="AAB67573.1"/>
    <property type="molecule type" value="Genomic_DNA"/>
</dbReference>
<dbReference type="EMBL" id="U19102">
    <property type="protein sequence ID" value="AAB67755.2"/>
    <property type="molecule type" value="Genomic_DNA"/>
</dbReference>
<dbReference type="EMBL" id="BK006945">
    <property type="protein sequence ID" value="DAA09662.1"/>
    <property type="molecule type" value="Genomic_DNA"/>
</dbReference>
<dbReference type="PIR" id="S51377">
    <property type="entry name" value="S51377"/>
</dbReference>
<dbReference type="RefSeq" id="NP_013463.1">
    <property type="nucleotide sequence ID" value="NM_001182248.1"/>
</dbReference>
<dbReference type="SMR" id="Q05911"/>
<dbReference type="BioGRID" id="31620">
    <property type="interactions" value="80"/>
</dbReference>
<dbReference type="DIP" id="DIP-2787N"/>
<dbReference type="FunCoup" id="Q05911">
    <property type="interactions" value="945"/>
</dbReference>
<dbReference type="IntAct" id="Q05911">
    <property type="interactions" value="19"/>
</dbReference>
<dbReference type="MINT" id="Q05911"/>
<dbReference type="STRING" id="4932.YLR359W"/>
<dbReference type="iPTMnet" id="Q05911"/>
<dbReference type="PaxDb" id="4932-YLR359W"/>
<dbReference type="PeptideAtlas" id="Q05911"/>
<dbReference type="EnsemblFungi" id="YLR359W_mRNA">
    <property type="protein sequence ID" value="YLR359W"/>
    <property type="gene ID" value="YLR359W"/>
</dbReference>
<dbReference type="GeneID" id="851073"/>
<dbReference type="KEGG" id="sce:YLR359W"/>
<dbReference type="AGR" id="SGD:S000004351"/>
<dbReference type="SGD" id="S000004351">
    <property type="gene designation" value="ADE13"/>
</dbReference>
<dbReference type="VEuPathDB" id="FungiDB:YLR359W"/>
<dbReference type="eggNOG" id="KOG2700">
    <property type="taxonomic scope" value="Eukaryota"/>
</dbReference>
<dbReference type="GeneTree" id="ENSGT00950000183122"/>
<dbReference type="HOGENOM" id="CLU_030949_1_1_1"/>
<dbReference type="InParanoid" id="Q05911"/>
<dbReference type="OMA" id="VQENAMK"/>
<dbReference type="OrthoDB" id="406045at2759"/>
<dbReference type="BioCyc" id="MetaCyc:YLR359W-MONOMER"/>
<dbReference type="BioCyc" id="YEAST:YLR359W-MONOMER"/>
<dbReference type="Reactome" id="R-SCE-73817">
    <property type="pathway name" value="Purine ribonucleoside monophosphate biosynthesis"/>
</dbReference>
<dbReference type="UniPathway" id="UPA00074">
    <property type="reaction ID" value="UER00132"/>
</dbReference>
<dbReference type="UniPathway" id="UPA00075">
    <property type="reaction ID" value="UER00336"/>
</dbReference>
<dbReference type="BioGRID-ORCS" id="851073">
    <property type="hits" value="5 hits in 10 CRISPR screens"/>
</dbReference>
<dbReference type="CD-CODE" id="E03F929F">
    <property type="entry name" value="Stress granule"/>
</dbReference>
<dbReference type="PRO" id="PR:Q05911"/>
<dbReference type="Proteomes" id="UP000002311">
    <property type="component" value="Chromosome XII"/>
</dbReference>
<dbReference type="RNAct" id="Q05911">
    <property type="molecule type" value="protein"/>
</dbReference>
<dbReference type="GO" id="GO:0005829">
    <property type="term" value="C:cytosol"/>
    <property type="evidence" value="ECO:0000318"/>
    <property type="project" value="GO_Central"/>
</dbReference>
<dbReference type="GO" id="GO:0070626">
    <property type="term" value="F:(S)-2-(5-amino-1-(5-phospho-D-ribosyl)imidazole-4-carboxamido) succinate lyase (fumarate-forming) activity"/>
    <property type="evidence" value="ECO:0000318"/>
    <property type="project" value="GO_Central"/>
</dbReference>
<dbReference type="GO" id="GO:0004018">
    <property type="term" value="F:N6-(1,2-dicarboxyethyl)AMP AMP-lyase (fumarate-forming) activity"/>
    <property type="evidence" value="ECO:0000315"/>
    <property type="project" value="SGD"/>
</dbReference>
<dbReference type="GO" id="GO:0044208">
    <property type="term" value="P:'de novo' AMP biosynthetic process"/>
    <property type="evidence" value="ECO:0000318"/>
    <property type="project" value="GO_Central"/>
</dbReference>
<dbReference type="GO" id="GO:0006189">
    <property type="term" value="P:'de novo' IMP biosynthetic process"/>
    <property type="evidence" value="ECO:0000315"/>
    <property type="project" value="SGD"/>
</dbReference>
<dbReference type="GO" id="GO:0006164">
    <property type="term" value="P:purine nucleotide biosynthetic process"/>
    <property type="evidence" value="ECO:0000315"/>
    <property type="project" value="SGD"/>
</dbReference>
<dbReference type="CDD" id="cd03302">
    <property type="entry name" value="Adenylsuccinate_lyase_2"/>
    <property type="match status" value="1"/>
</dbReference>
<dbReference type="FunFam" id="1.10.275.60:FF:000001">
    <property type="entry name" value="Adenylosuccinate lyase"/>
    <property type="match status" value="1"/>
</dbReference>
<dbReference type="FunFam" id="1.10.40.30:FF:000005">
    <property type="entry name" value="Adenylosuccinate lyase"/>
    <property type="match status" value="1"/>
</dbReference>
<dbReference type="Gene3D" id="1.10.275.60">
    <property type="match status" value="1"/>
</dbReference>
<dbReference type="Gene3D" id="1.10.40.30">
    <property type="entry name" value="Fumarase/aspartase (C-terminal domain)"/>
    <property type="match status" value="1"/>
</dbReference>
<dbReference type="Gene3D" id="1.20.200.10">
    <property type="entry name" value="Fumarase/aspartase (Central domain)"/>
    <property type="match status" value="1"/>
</dbReference>
<dbReference type="InterPro" id="IPR019468">
    <property type="entry name" value="AdenyloSucc_lyase_C"/>
</dbReference>
<dbReference type="InterPro" id="IPR020557">
    <property type="entry name" value="Fumarate_lyase_CS"/>
</dbReference>
<dbReference type="InterPro" id="IPR000362">
    <property type="entry name" value="Fumarate_lyase_fam"/>
</dbReference>
<dbReference type="InterPro" id="IPR022761">
    <property type="entry name" value="Fumarate_lyase_N"/>
</dbReference>
<dbReference type="InterPro" id="IPR008948">
    <property type="entry name" value="L-Aspartase-like"/>
</dbReference>
<dbReference type="InterPro" id="IPR004769">
    <property type="entry name" value="Pur_lyase"/>
</dbReference>
<dbReference type="NCBIfam" id="TIGR00928">
    <property type="entry name" value="purB"/>
    <property type="match status" value="1"/>
</dbReference>
<dbReference type="PANTHER" id="PTHR43172">
    <property type="entry name" value="ADENYLOSUCCINATE LYASE"/>
    <property type="match status" value="1"/>
</dbReference>
<dbReference type="PANTHER" id="PTHR43172:SF1">
    <property type="entry name" value="ADENYLOSUCCINATE LYASE"/>
    <property type="match status" value="1"/>
</dbReference>
<dbReference type="Pfam" id="PF10397">
    <property type="entry name" value="ADSL_C"/>
    <property type="match status" value="1"/>
</dbReference>
<dbReference type="Pfam" id="PF00206">
    <property type="entry name" value="Lyase_1"/>
    <property type="match status" value="1"/>
</dbReference>
<dbReference type="PRINTS" id="PR00149">
    <property type="entry name" value="FUMRATELYASE"/>
</dbReference>
<dbReference type="SMART" id="SM00998">
    <property type="entry name" value="ADSL_C"/>
    <property type="match status" value="1"/>
</dbReference>
<dbReference type="SUPFAM" id="SSF48557">
    <property type="entry name" value="L-aspartase-like"/>
    <property type="match status" value="1"/>
</dbReference>
<dbReference type="PROSITE" id="PS00163">
    <property type="entry name" value="FUMARATE_LYASES"/>
    <property type="match status" value="1"/>
</dbReference>
<evidence type="ECO:0000250" key="1"/>
<evidence type="ECO:0000269" key="2">
    <source>
    </source>
</evidence>
<evidence type="ECO:0000305" key="3"/>
<feature type="chain" id="PRO_0000137899" description="Adenylosuccinate lyase">
    <location>
        <begin position="1"/>
        <end position="482"/>
    </location>
</feature>
<feature type="active site" description="Proton donor/acceptor" evidence="1">
    <location>
        <position position="156"/>
    </location>
</feature>
<feature type="active site" description="Proton donor/acceptor" evidence="1">
    <location>
        <position position="286"/>
    </location>
</feature>
<feature type="binding site" evidence="1">
    <location>
        <begin position="14"/>
        <end position="15"/>
    </location>
    <ligand>
        <name>substrate</name>
        <note>ligand shared between two neighboring subunits</note>
    </ligand>
</feature>
<feature type="binding site" description="in other chain" evidence="1">
    <location>
        <begin position="82"/>
        <end position="84"/>
    </location>
    <ligand>
        <name>substrate</name>
        <note>ligand shared between two neighboring subunits</note>
    </ligand>
</feature>
<feature type="binding site" description="in other chain" evidence="1">
    <location>
        <begin position="108"/>
        <end position="109"/>
    </location>
    <ligand>
        <name>substrate</name>
        <note>ligand shared between two neighboring subunits</note>
    </ligand>
</feature>
<feature type="binding site" description="in other chain" evidence="1">
    <location>
        <position position="238"/>
    </location>
    <ligand>
        <name>substrate</name>
        <note>ligand shared between two neighboring subunits</note>
    </ligand>
</feature>
<feature type="binding site" evidence="1">
    <location>
        <position position="300"/>
    </location>
    <ligand>
        <name>substrate</name>
        <note>ligand shared between two neighboring subunits</note>
    </ligand>
</feature>
<feature type="binding site" description="in other chain" evidence="1">
    <location>
        <position position="326"/>
    </location>
    <ligand>
        <name>substrate</name>
        <note>ligand shared between two neighboring subunits</note>
    </ligand>
</feature>
<feature type="binding site" description="in other chain" evidence="1">
    <location>
        <position position="331"/>
    </location>
    <ligand>
        <name>substrate</name>
        <note>ligand shared between two neighboring subunits</note>
    </ligand>
</feature>
<feature type="binding site" description="in other chain" evidence="1">
    <location>
        <position position="335"/>
    </location>
    <ligand>
        <name>substrate</name>
        <note>ligand shared between two neighboring subunits</note>
    </ligand>
</feature>
<feature type="cross-link" description="Glycyl lysine isopeptide (Lys-Gly) (interchain with G-Cter in ubiquitin)" evidence="2">
    <location>
        <position position="196"/>
    </location>
</feature>
<reference key="1">
    <citation type="journal article" date="1997" name="Nature">
        <title>The nucleotide sequence of Saccharomyces cerevisiae chromosome XII.</title>
        <authorList>
            <person name="Johnston M."/>
            <person name="Hillier L.W."/>
            <person name="Riles L."/>
            <person name="Albermann K."/>
            <person name="Andre B."/>
            <person name="Ansorge W."/>
            <person name="Benes V."/>
            <person name="Brueckner M."/>
            <person name="Delius H."/>
            <person name="Dubois E."/>
            <person name="Duesterhoeft A."/>
            <person name="Entian K.-D."/>
            <person name="Floeth M."/>
            <person name="Goffeau A."/>
            <person name="Hebling U."/>
            <person name="Heumann K."/>
            <person name="Heuss-Neitzel D."/>
            <person name="Hilbert H."/>
            <person name="Hilger F."/>
            <person name="Kleine K."/>
            <person name="Koetter P."/>
            <person name="Louis E.J."/>
            <person name="Messenguy F."/>
            <person name="Mewes H.-W."/>
            <person name="Miosga T."/>
            <person name="Moestl D."/>
            <person name="Mueller-Auer S."/>
            <person name="Nentwich U."/>
            <person name="Obermaier B."/>
            <person name="Piravandi E."/>
            <person name="Pohl T.M."/>
            <person name="Portetelle D."/>
            <person name="Purnelle B."/>
            <person name="Rechmann S."/>
            <person name="Rieger M."/>
            <person name="Rinke M."/>
            <person name="Rose M."/>
            <person name="Scharfe M."/>
            <person name="Scherens B."/>
            <person name="Scholler P."/>
            <person name="Schwager C."/>
            <person name="Schwarz S."/>
            <person name="Underwood A.P."/>
            <person name="Urrestarazu L.A."/>
            <person name="Vandenbol M."/>
            <person name="Verhasselt P."/>
            <person name="Vierendeels F."/>
            <person name="Voet M."/>
            <person name="Volckaert G."/>
            <person name="Voss H."/>
            <person name="Wambutt R."/>
            <person name="Wedler E."/>
            <person name="Wedler H."/>
            <person name="Zimmermann F.K."/>
            <person name="Zollner A."/>
            <person name="Hani J."/>
            <person name="Hoheisel J.D."/>
        </authorList>
    </citation>
    <scope>NUCLEOTIDE SEQUENCE [LARGE SCALE GENOMIC DNA]</scope>
    <source>
        <strain>ATCC 204508 / S288c</strain>
    </source>
</reference>
<reference key="2">
    <citation type="journal article" date="2014" name="G3 (Bethesda)">
        <title>The reference genome sequence of Saccharomyces cerevisiae: Then and now.</title>
        <authorList>
            <person name="Engel S.R."/>
            <person name="Dietrich F.S."/>
            <person name="Fisk D.G."/>
            <person name="Binkley G."/>
            <person name="Balakrishnan R."/>
            <person name="Costanzo M.C."/>
            <person name="Dwight S.S."/>
            <person name="Hitz B.C."/>
            <person name="Karra K."/>
            <person name="Nash R.S."/>
            <person name="Weng S."/>
            <person name="Wong E.D."/>
            <person name="Lloyd P."/>
            <person name="Skrzypek M.S."/>
            <person name="Miyasato S.R."/>
            <person name="Simison M."/>
            <person name="Cherry J.M."/>
        </authorList>
    </citation>
    <scope>GENOME REANNOTATION</scope>
    <source>
        <strain>ATCC 204508 / S288c</strain>
    </source>
</reference>
<reference key="3">
    <citation type="journal article" date="2003" name="Nat. Biotechnol.">
        <title>A proteomics approach to understanding protein ubiquitination.</title>
        <authorList>
            <person name="Peng J."/>
            <person name="Schwartz D."/>
            <person name="Elias J.E."/>
            <person name="Thoreen C.C."/>
            <person name="Cheng D."/>
            <person name="Marsischky G."/>
            <person name="Roelofs J."/>
            <person name="Finley D."/>
            <person name="Gygi S.P."/>
        </authorList>
    </citation>
    <scope>UBIQUITINATION [LARGE SCALE ANALYSIS] AT LYS-196</scope>
    <scope>IDENTIFICATION BY MASS SPECTROMETRY</scope>
    <source>
        <strain>SUB592</strain>
    </source>
</reference>
<reference key="4">
    <citation type="journal article" date="2008" name="Mol. Cell. Proteomics">
        <title>A multidimensional chromatography technology for in-depth phosphoproteome analysis.</title>
        <authorList>
            <person name="Albuquerque C.P."/>
            <person name="Smolka M.B."/>
            <person name="Payne S.H."/>
            <person name="Bafna V."/>
            <person name="Eng J."/>
            <person name="Zhou H."/>
        </authorList>
    </citation>
    <scope>IDENTIFICATION BY MASS SPECTROMETRY [LARGE SCALE ANALYSIS]</scope>
</reference>
<reference key="5">
    <citation type="journal article" date="2012" name="Proc. Natl. Acad. Sci. U.S.A.">
        <title>N-terminal acetylome analyses and functional insights of the N-terminal acetyltransferase NatB.</title>
        <authorList>
            <person name="Van Damme P."/>
            <person name="Lasa M."/>
            <person name="Polevoda B."/>
            <person name="Gazquez C."/>
            <person name="Elosegui-Artola A."/>
            <person name="Kim D.S."/>
            <person name="De Juan-Pardo E."/>
            <person name="Demeyer K."/>
            <person name="Hole K."/>
            <person name="Larrea E."/>
            <person name="Timmerman E."/>
            <person name="Prieto J."/>
            <person name="Arnesen T."/>
            <person name="Sherman F."/>
            <person name="Gevaert K."/>
            <person name="Aldabe R."/>
        </authorList>
    </citation>
    <scope>IDENTIFICATION BY MASS SPECTROMETRY [LARGE SCALE ANALYSIS]</scope>
</reference>
<accession>Q05911</accession>
<accession>D6VYZ6</accession>
<name>PUR8_YEAST</name>
<organism>
    <name type="scientific">Saccharomyces cerevisiae (strain ATCC 204508 / S288c)</name>
    <name type="common">Baker's yeast</name>
    <dbReference type="NCBI Taxonomy" id="559292"/>
    <lineage>
        <taxon>Eukaryota</taxon>
        <taxon>Fungi</taxon>
        <taxon>Dikarya</taxon>
        <taxon>Ascomycota</taxon>
        <taxon>Saccharomycotina</taxon>
        <taxon>Saccharomycetes</taxon>
        <taxon>Saccharomycetales</taxon>
        <taxon>Saccharomycetaceae</taxon>
        <taxon>Saccharomyces</taxon>
    </lineage>
</organism>
<proteinExistence type="evidence at protein level"/>
<protein>
    <recommendedName>
        <fullName>Adenylosuccinate lyase</fullName>
        <shortName>ASL</shortName>
        <ecNumber>4.3.2.2</ecNumber>
    </recommendedName>
    <alternativeName>
        <fullName>Adenylosuccinase</fullName>
        <shortName>ASase</shortName>
    </alternativeName>
</protein>
<sequence length="482" mass="54510">MPDYDNYTTPLSSRYASKEMSATFSLRNRFSTWRKLWLNLAIAEKELGLTVVTDEAIEQMRKHVEITDDEIAKASAQEAIVRHDVMAHVHTFGETCPAAAGIIHLGATSCFVTDNADLIFIRDAYDIIIPKLVNVINRLAKFAMEYKDLPVLGWTHFQPAQLTTLGKRATLWIQELLWDLRNFERARNDIGLRGVKGTTGTQASFLALFHGNHDKVEALDERVTELLGFDKVYPVTGQTYSRKIDIDVLAPLSSFAATAHKMATDIRLLANLKEVEEPFEKSQIGSSAMAYKRNPMRCERVCSLARHLGSLFSDAVQTASVQWFERTLDDSAIRRISLPSAFLTADILLSTLLNISSGLVVYPKVIERRIKGELPFMATENIIMAMVEKNASRQEVHERIRVLSHQAAAVVKEEGGENDLIERVKRDEFFKPIWEELDSLLEPSTFVGRAPQQVEKFVQKDVNNALQPFQKYLNDEQVKLNV</sequence>
<keyword id="KW-1017">Isopeptide bond</keyword>
<keyword id="KW-0456">Lyase</keyword>
<keyword id="KW-0658">Purine biosynthesis</keyword>
<keyword id="KW-1185">Reference proteome</keyword>
<keyword id="KW-0832">Ubl conjugation</keyword>